<evidence type="ECO:0000255" key="1">
    <source>
        <dbReference type="HAMAP-Rule" id="MF_00600"/>
    </source>
</evidence>
<dbReference type="EC" id="5.6.1.7" evidence="1"/>
<dbReference type="EMBL" id="CP000479">
    <property type="protein sequence ID" value="ABK65895.1"/>
    <property type="molecule type" value="Genomic_DNA"/>
</dbReference>
<dbReference type="SMR" id="A0QKR2"/>
<dbReference type="KEGG" id="mav:MAV_4365"/>
<dbReference type="HOGENOM" id="CLU_016503_3_0_11"/>
<dbReference type="Proteomes" id="UP000001574">
    <property type="component" value="Chromosome"/>
</dbReference>
<dbReference type="GO" id="GO:0005737">
    <property type="term" value="C:cytoplasm"/>
    <property type="evidence" value="ECO:0007669"/>
    <property type="project" value="UniProtKB-SubCell"/>
</dbReference>
<dbReference type="GO" id="GO:0005524">
    <property type="term" value="F:ATP binding"/>
    <property type="evidence" value="ECO:0007669"/>
    <property type="project" value="UniProtKB-UniRule"/>
</dbReference>
<dbReference type="GO" id="GO:0140662">
    <property type="term" value="F:ATP-dependent protein folding chaperone"/>
    <property type="evidence" value="ECO:0007669"/>
    <property type="project" value="InterPro"/>
</dbReference>
<dbReference type="GO" id="GO:0016853">
    <property type="term" value="F:isomerase activity"/>
    <property type="evidence" value="ECO:0007669"/>
    <property type="project" value="UniProtKB-KW"/>
</dbReference>
<dbReference type="GO" id="GO:0051082">
    <property type="term" value="F:unfolded protein binding"/>
    <property type="evidence" value="ECO:0007669"/>
    <property type="project" value="UniProtKB-UniRule"/>
</dbReference>
<dbReference type="GO" id="GO:0042026">
    <property type="term" value="P:protein refolding"/>
    <property type="evidence" value="ECO:0007669"/>
    <property type="project" value="UniProtKB-UniRule"/>
</dbReference>
<dbReference type="CDD" id="cd03344">
    <property type="entry name" value="GroEL"/>
    <property type="match status" value="1"/>
</dbReference>
<dbReference type="FunFam" id="3.50.7.10:FF:000001">
    <property type="entry name" value="60 kDa chaperonin"/>
    <property type="match status" value="1"/>
</dbReference>
<dbReference type="Gene3D" id="3.50.7.10">
    <property type="entry name" value="GroEL"/>
    <property type="match status" value="1"/>
</dbReference>
<dbReference type="Gene3D" id="1.10.560.10">
    <property type="entry name" value="GroEL-like equatorial domain"/>
    <property type="match status" value="1"/>
</dbReference>
<dbReference type="Gene3D" id="3.30.260.10">
    <property type="entry name" value="TCP-1-like chaperonin intermediate domain"/>
    <property type="match status" value="1"/>
</dbReference>
<dbReference type="HAMAP" id="MF_00600">
    <property type="entry name" value="CH60"/>
    <property type="match status" value="1"/>
</dbReference>
<dbReference type="InterPro" id="IPR018370">
    <property type="entry name" value="Chaperonin_Cpn60_CS"/>
</dbReference>
<dbReference type="InterPro" id="IPR001844">
    <property type="entry name" value="Cpn60/GroEL"/>
</dbReference>
<dbReference type="InterPro" id="IPR002423">
    <property type="entry name" value="Cpn60/GroEL/TCP-1"/>
</dbReference>
<dbReference type="InterPro" id="IPR027409">
    <property type="entry name" value="GroEL-like_apical_dom_sf"/>
</dbReference>
<dbReference type="InterPro" id="IPR027413">
    <property type="entry name" value="GROEL-like_equatorial_sf"/>
</dbReference>
<dbReference type="InterPro" id="IPR027410">
    <property type="entry name" value="TCP-1-like_intermed_sf"/>
</dbReference>
<dbReference type="NCBIfam" id="TIGR02348">
    <property type="entry name" value="GroEL"/>
    <property type="match status" value="1"/>
</dbReference>
<dbReference type="NCBIfam" id="NF000592">
    <property type="entry name" value="PRK00013.1"/>
    <property type="match status" value="1"/>
</dbReference>
<dbReference type="NCBIfam" id="NF009487">
    <property type="entry name" value="PRK12849.1"/>
    <property type="match status" value="1"/>
</dbReference>
<dbReference type="NCBIfam" id="NF009488">
    <property type="entry name" value="PRK12850.1"/>
    <property type="match status" value="1"/>
</dbReference>
<dbReference type="NCBIfam" id="NF009489">
    <property type="entry name" value="PRK12851.1"/>
    <property type="match status" value="1"/>
</dbReference>
<dbReference type="PANTHER" id="PTHR45633">
    <property type="entry name" value="60 KDA HEAT SHOCK PROTEIN, MITOCHONDRIAL"/>
    <property type="match status" value="1"/>
</dbReference>
<dbReference type="Pfam" id="PF00118">
    <property type="entry name" value="Cpn60_TCP1"/>
    <property type="match status" value="1"/>
</dbReference>
<dbReference type="PRINTS" id="PR00298">
    <property type="entry name" value="CHAPERONIN60"/>
</dbReference>
<dbReference type="SUPFAM" id="SSF52029">
    <property type="entry name" value="GroEL apical domain-like"/>
    <property type="match status" value="1"/>
</dbReference>
<dbReference type="SUPFAM" id="SSF48592">
    <property type="entry name" value="GroEL equatorial domain-like"/>
    <property type="match status" value="1"/>
</dbReference>
<dbReference type="SUPFAM" id="SSF54849">
    <property type="entry name" value="GroEL-intermediate domain like"/>
    <property type="match status" value="1"/>
</dbReference>
<dbReference type="PROSITE" id="PS00296">
    <property type="entry name" value="CHAPERONINS_CPN60"/>
    <property type="match status" value="1"/>
</dbReference>
<accession>A0QKR2</accession>
<comment type="function">
    <text evidence="1">Together with its co-chaperonin GroES, plays an essential role in assisting protein folding. The GroEL-GroES system forms a nano-cage that allows encapsulation of the non-native substrate proteins and provides a physical environment optimized to promote and accelerate protein folding.</text>
</comment>
<comment type="catalytic activity">
    <reaction evidence="1">
        <text>ATP + H2O + a folded polypeptide = ADP + phosphate + an unfolded polypeptide.</text>
        <dbReference type="EC" id="5.6.1.7"/>
    </reaction>
</comment>
<comment type="subunit">
    <text evidence="1">Forms a cylinder of 14 subunits composed of two heptameric rings stacked back-to-back. Interacts with the co-chaperonin GroES.</text>
</comment>
<comment type="subcellular location">
    <subcellularLocation>
        <location evidence="1">Cytoplasm</location>
    </subcellularLocation>
</comment>
<comment type="similarity">
    <text evidence="1">Belongs to the chaperonin (HSP60) family.</text>
</comment>
<sequence>MSKIIEYDETARRAIEAGVNTLADAVRVTLGPRGRHVVLAKAFGGPAVTNDGVTVAREIDLEDPFENLGAQLVKSVATKTNDVAGDGTTTATVLAQALVKGGLRLVAAGANPIELGAGISKAADAVSEALLASATTVSGKDAIAQVATVSSRDQVLGELVGEAMTKVGVDGVVSVEESSTLNTELEFTEGVGFDKGFLSAYFVTDFDAQQAVLDDPVILLHQEKISSLPDLLPMLEKVAESGKPLLIIAEDIEGEALATLVVNSIRKTLKAVAVKAPFFGDRRKAFLEDLAIVTGGQVINPDTGLLLREVGTEVLGSARRVVVSKDDTIIVDGGGAKDAVANRIKQLRAEIEKTDSDWDREKLQERLAKLAGGVAVIKVGAATETALKERKESVEDAVAAAKAAVEEGIVAGGGSALLQARKALDELRGSLSGDQALGVDVFAEALGAPLYWIASNAGLDGAVAVHKVAELPAGHGLNAEKLSYGDLIADGVIDPVKVTRSAVLNSASVARMVLTTETAVVDKPAEEADDHGHGHHHH</sequence>
<feature type="chain" id="PRO_0000332012" description="Chaperonin GroEL 1">
    <location>
        <begin position="1"/>
        <end position="538"/>
    </location>
</feature>
<feature type="binding site" evidence="1">
    <location>
        <begin position="29"/>
        <end position="32"/>
    </location>
    <ligand>
        <name>ATP</name>
        <dbReference type="ChEBI" id="CHEBI:30616"/>
    </ligand>
</feature>
<feature type="binding site" evidence="1">
    <location>
        <begin position="86"/>
        <end position="90"/>
    </location>
    <ligand>
        <name>ATP</name>
        <dbReference type="ChEBI" id="CHEBI:30616"/>
    </ligand>
</feature>
<feature type="binding site" evidence="1">
    <location>
        <position position="413"/>
    </location>
    <ligand>
        <name>ATP</name>
        <dbReference type="ChEBI" id="CHEBI:30616"/>
    </ligand>
</feature>
<feature type="binding site" evidence="1">
    <location>
        <position position="494"/>
    </location>
    <ligand>
        <name>ATP</name>
        <dbReference type="ChEBI" id="CHEBI:30616"/>
    </ligand>
</feature>
<proteinExistence type="inferred from homology"/>
<gene>
    <name evidence="1" type="primary">groEL1</name>
    <name evidence="1" type="synonym">groL1</name>
    <name type="ordered locus">MAV_4365</name>
</gene>
<name>CH601_MYCA1</name>
<organism>
    <name type="scientific">Mycobacterium avium (strain 104)</name>
    <dbReference type="NCBI Taxonomy" id="243243"/>
    <lineage>
        <taxon>Bacteria</taxon>
        <taxon>Bacillati</taxon>
        <taxon>Actinomycetota</taxon>
        <taxon>Actinomycetes</taxon>
        <taxon>Mycobacteriales</taxon>
        <taxon>Mycobacteriaceae</taxon>
        <taxon>Mycobacterium</taxon>
        <taxon>Mycobacterium avium complex (MAC)</taxon>
    </lineage>
</organism>
<protein>
    <recommendedName>
        <fullName evidence="1">Chaperonin GroEL 1</fullName>
        <ecNumber evidence="1">5.6.1.7</ecNumber>
    </recommendedName>
    <alternativeName>
        <fullName evidence="1">60 kDa chaperonin 1</fullName>
    </alternativeName>
    <alternativeName>
        <fullName evidence="1">Chaperonin-60 1</fullName>
        <shortName evidence="1">Cpn60 1</shortName>
    </alternativeName>
</protein>
<keyword id="KW-0067">ATP-binding</keyword>
<keyword id="KW-0143">Chaperone</keyword>
<keyword id="KW-0963">Cytoplasm</keyword>
<keyword id="KW-0413">Isomerase</keyword>
<keyword id="KW-0547">Nucleotide-binding</keyword>
<reference key="1">
    <citation type="submission" date="2006-10" db="EMBL/GenBank/DDBJ databases">
        <authorList>
            <person name="Fleischmann R.D."/>
            <person name="Dodson R.J."/>
            <person name="Haft D.H."/>
            <person name="Merkel J.S."/>
            <person name="Nelson W.C."/>
            <person name="Fraser C.M."/>
        </authorList>
    </citation>
    <scope>NUCLEOTIDE SEQUENCE [LARGE SCALE GENOMIC DNA]</scope>
    <source>
        <strain>104</strain>
    </source>
</reference>